<protein>
    <recommendedName>
        <fullName>Protein OPG030</fullName>
    </recommendedName>
</protein>
<name>PG030_VARV</name>
<organismHost>
    <name type="scientific">Homo sapiens</name>
    <name type="common">Human</name>
    <dbReference type="NCBI Taxonomy" id="9606"/>
</organismHost>
<proteinExistence type="inferred from homology"/>
<keyword id="KW-0244">Early protein</keyword>
<feature type="chain" id="PRO_0000448172" description="Protein OPG030">
    <location>
        <begin position="1"/>
        <end position="134"/>
    </location>
</feature>
<feature type="domain" description="BACK">
    <location>
        <begin position="88"/>
        <end position="133"/>
    </location>
</feature>
<comment type="induction">
    <text evidence="1">Expressed in the early phase of the viral replicative cycle.</text>
</comment>
<comment type="similarity">
    <text evidence="2">Belongs to the orthopoxvirus OPG030 family.</text>
</comment>
<reference key="1">
    <citation type="journal article" date="1993" name="Nature">
        <title>Potential virulence determinants in terminal regions of variola smallpox virus genome.</title>
        <authorList>
            <person name="Massung R.F."/>
            <person name="Esposito J.J."/>
            <person name="Liu L.I."/>
            <person name="Qi J."/>
            <person name="Utterback T.R."/>
            <person name="Knight J.C."/>
            <person name="Aubin L."/>
            <person name="Yuran T.E."/>
            <person name="Parsons J.M."/>
            <person name="Loparev V.N."/>
            <person name="Selivanov N.A."/>
            <person name="Cavallaro K.F."/>
            <person name="Kerlavage A.R."/>
            <person name="Mahy B.W.J."/>
            <person name="Venter J.C."/>
        </authorList>
    </citation>
    <scope>NUCLEOTIDE SEQUENCE [GENOMIC DNA]</scope>
    <source>
        <strain>Bangladesh-1975</strain>
    </source>
</reference>
<reference key="2">
    <citation type="submission" date="1994-12" db="EMBL/GenBank/DDBJ databases">
        <authorList>
            <person name="Massung R.F."/>
            <person name="Loparev V.N."/>
            <person name="Knight J.C."/>
            <person name="Chizhikov V.E."/>
            <person name="Parsons J.M."/>
            <person name="Totmenin A.V."/>
            <person name="Shchelkunov S.N."/>
            <person name="Esposito J.J."/>
        </authorList>
    </citation>
    <scope>NUCLEOTIDE SEQUENCE [GENOMIC DNA]</scope>
    <source>
        <strain>Congo-1965</strain>
        <strain>Garcia-1966</strain>
        <strain>Somalia-1977</strain>
    </source>
</reference>
<organism>
    <name type="scientific">Variola virus</name>
    <dbReference type="NCBI Taxonomy" id="10255"/>
    <lineage>
        <taxon>Viruses</taxon>
        <taxon>Varidnaviria</taxon>
        <taxon>Bamfordvirae</taxon>
        <taxon>Nucleocytoviricota</taxon>
        <taxon>Pokkesviricetes</taxon>
        <taxon>Chitovirales</taxon>
        <taxon>Poxviridae</taxon>
        <taxon>Chordopoxvirinae</taxon>
        <taxon>Orthopoxvirus</taxon>
    </lineage>
</organism>
<evidence type="ECO:0000250" key="1">
    <source>
        <dbReference type="UniProtKB" id="P17367"/>
    </source>
</evidence>
<evidence type="ECO:0000305" key="2"/>
<gene>
    <name type="primary">OPG30</name>
    <name type="synonym">D10L</name>
    <name type="synonym">D13L</name>
</gene>
<accession>P0DOR1</accession>
<accession>P34013</accession>
<sequence>MDTYMNRLDLDKLKHENIFSGNIIEDAKEFVFGSRKIYTDSVNDLIELYNLAKYLNNEKLKDVVIERMDYVCKYIIGKDNWYTIYSFYKENGLRNSFLRQYINNNIEEIRNTDQFLKFDVDSVCDILNNDETIV</sequence>
<dbReference type="EMBL" id="L22579">
    <property type="protein sequence ID" value="AAA60758.1"/>
    <property type="molecule type" value="Genomic_DNA"/>
</dbReference>
<dbReference type="EMBL" id="U18340">
    <property type="protein sequence ID" value="AAA69421.1"/>
    <property type="molecule type" value="Genomic_DNA"/>
</dbReference>
<dbReference type="EMBL" id="U18337">
    <property type="protein sequence ID" value="AAA69315.1"/>
    <property type="molecule type" value="Genomic_DNA"/>
</dbReference>
<dbReference type="EMBL" id="U18338">
    <property type="protein sequence ID" value="AAA69356.1"/>
    <property type="molecule type" value="Genomic_DNA"/>
</dbReference>
<dbReference type="PIR" id="H72151">
    <property type="entry name" value="H72151"/>
</dbReference>
<dbReference type="PIR" id="T28448">
    <property type="entry name" value="T28448"/>
</dbReference>
<dbReference type="RefSeq" id="NP_042054.1">
    <property type="nucleotide sequence ID" value="NC_001611.1"/>
</dbReference>
<dbReference type="SMR" id="P0DOR1"/>
<dbReference type="GeneID" id="1486390"/>
<dbReference type="KEGG" id="vg:1486390"/>
<dbReference type="Proteomes" id="UP000119805">
    <property type="component" value="Segment"/>
</dbReference>
<dbReference type="Gene3D" id="1.25.40.420">
    <property type="match status" value="1"/>
</dbReference>
<dbReference type="InterPro" id="IPR009177">
    <property type="entry name" value="Orthopox_C5"/>
</dbReference>
<dbReference type="PIRSF" id="PIRSF003781">
    <property type="entry name" value="VAC_C5L"/>
    <property type="match status" value="1"/>
</dbReference>